<gene>
    <name evidence="1" type="primary">ackA</name>
    <name type="ordered locus">PG_1081</name>
</gene>
<comment type="function">
    <text evidence="1">Catalyzes the formation of acetyl phosphate from acetate and ATP. Can also catalyze the reverse reaction.</text>
</comment>
<comment type="catalytic activity">
    <reaction evidence="1">
        <text>acetate + ATP = acetyl phosphate + ADP</text>
        <dbReference type="Rhea" id="RHEA:11352"/>
        <dbReference type="ChEBI" id="CHEBI:22191"/>
        <dbReference type="ChEBI" id="CHEBI:30089"/>
        <dbReference type="ChEBI" id="CHEBI:30616"/>
        <dbReference type="ChEBI" id="CHEBI:456216"/>
        <dbReference type="EC" id="2.7.2.1"/>
    </reaction>
</comment>
<comment type="cofactor">
    <cofactor evidence="1">
        <name>Mg(2+)</name>
        <dbReference type="ChEBI" id="CHEBI:18420"/>
    </cofactor>
    <cofactor evidence="1">
        <name>Mn(2+)</name>
        <dbReference type="ChEBI" id="CHEBI:29035"/>
    </cofactor>
    <text evidence="1">Mg(2+). Can also accept Mn(2+).</text>
</comment>
<comment type="pathway">
    <text evidence="1">Metabolic intermediate biosynthesis; acetyl-CoA biosynthesis; acetyl-CoA from acetate: step 1/2.</text>
</comment>
<comment type="subunit">
    <text evidence="1">Homodimer.</text>
</comment>
<comment type="subcellular location">
    <subcellularLocation>
        <location evidence="1">Cytoplasm</location>
    </subcellularLocation>
</comment>
<comment type="similarity">
    <text evidence="1">Belongs to the acetokinase family.</text>
</comment>
<sequence>MKVLVLNCGSSSVKYKLLEMPKGDVLAQGGVEKLGLPGSFLKLTMPNGEKVVLEKDMPEHTIAVEFILSVLKDDKYGCIKSYEEIDAVGHRLVHGGEKFSNSVEITPEVIAKVEECIPLAPLHNPANLKGVVAIEKLLPGIRQVGVFDTAFFQTMPEHVYRYALPYDMCNKHGVRRYGFHGTSHRYVSARACEILGLDYDKTRIITAHIGNGASIAAIKNGKALDVSLGMTPVEGLMMGTRSGDVDPGVLTFLMEAEGLEAAGISELINKKSGVLGVSGVSSDMREIEDAIKNGNERATLAMTMYDYRIKKYVGAYAAAMGGVDVLVFTGGVGENQYTTREKVCTDMEFMGIVFDSKVNEGMRGKEMVISKPESKVTVIVVPTDEEYMIASDTMTILK</sequence>
<organism>
    <name type="scientific">Porphyromonas gingivalis (strain ATCC BAA-308 / W83)</name>
    <dbReference type="NCBI Taxonomy" id="242619"/>
    <lineage>
        <taxon>Bacteria</taxon>
        <taxon>Pseudomonadati</taxon>
        <taxon>Bacteroidota</taxon>
        <taxon>Bacteroidia</taxon>
        <taxon>Bacteroidales</taxon>
        <taxon>Porphyromonadaceae</taxon>
        <taxon>Porphyromonas</taxon>
    </lineage>
</organism>
<reference key="1">
    <citation type="journal article" date="2003" name="J. Bacteriol.">
        <title>Complete genome sequence of the oral pathogenic bacterium Porphyromonas gingivalis strain W83.</title>
        <authorList>
            <person name="Nelson K.E."/>
            <person name="Fleischmann R.D."/>
            <person name="DeBoy R.T."/>
            <person name="Paulsen I.T."/>
            <person name="Fouts D.E."/>
            <person name="Eisen J.A."/>
            <person name="Daugherty S.C."/>
            <person name="Dodson R.J."/>
            <person name="Durkin A.S."/>
            <person name="Gwinn M.L."/>
            <person name="Haft D.H."/>
            <person name="Kolonay J.F."/>
            <person name="Nelson W.C."/>
            <person name="Mason T.M."/>
            <person name="Tallon L."/>
            <person name="Gray J."/>
            <person name="Granger D."/>
            <person name="Tettelin H."/>
            <person name="Dong H."/>
            <person name="Galvin J.L."/>
            <person name="Duncan M.J."/>
            <person name="Dewhirst F.E."/>
            <person name="Fraser C.M."/>
        </authorList>
    </citation>
    <scope>NUCLEOTIDE SEQUENCE [LARGE SCALE GENOMIC DNA]</scope>
    <source>
        <strain>ATCC BAA-308 / W83</strain>
    </source>
</reference>
<protein>
    <recommendedName>
        <fullName evidence="1">Acetate kinase</fullName>
        <ecNumber evidence="1">2.7.2.1</ecNumber>
    </recommendedName>
    <alternativeName>
        <fullName evidence="1">Acetokinase</fullName>
    </alternativeName>
</protein>
<evidence type="ECO:0000255" key="1">
    <source>
        <dbReference type="HAMAP-Rule" id="MF_00020"/>
    </source>
</evidence>
<feature type="chain" id="PRO_0000107601" description="Acetate kinase">
    <location>
        <begin position="1"/>
        <end position="398"/>
    </location>
</feature>
<feature type="active site" description="Proton donor/acceptor" evidence="1">
    <location>
        <position position="148"/>
    </location>
</feature>
<feature type="binding site" evidence="1">
    <location>
        <position position="7"/>
    </location>
    <ligand>
        <name>Mg(2+)</name>
        <dbReference type="ChEBI" id="CHEBI:18420"/>
    </ligand>
</feature>
<feature type="binding site" evidence="1">
    <location>
        <position position="14"/>
    </location>
    <ligand>
        <name>ATP</name>
        <dbReference type="ChEBI" id="CHEBI:30616"/>
    </ligand>
</feature>
<feature type="binding site" evidence="1">
    <location>
        <position position="91"/>
    </location>
    <ligand>
        <name>substrate</name>
    </ligand>
</feature>
<feature type="binding site" evidence="1">
    <location>
        <begin position="208"/>
        <end position="212"/>
    </location>
    <ligand>
        <name>ATP</name>
        <dbReference type="ChEBI" id="CHEBI:30616"/>
    </ligand>
</feature>
<feature type="binding site" evidence="1">
    <location>
        <begin position="283"/>
        <end position="285"/>
    </location>
    <ligand>
        <name>ATP</name>
        <dbReference type="ChEBI" id="CHEBI:30616"/>
    </ligand>
</feature>
<feature type="binding site" evidence="1">
    <location>
        <begin position="331"/>
        <end position="335"/>
    </location>
    <ligand>
        <name>ATP</name>
        <dbReference type="ChEBI" id="CHEBI:30616"/>
    </ligand>
</feature>
<feature type="binding site" evidence="1">
    <location>
        <position position="385"/>
    </location>
    <ligand>
        <name>Mg(2+)</name>
        <dbReference type="ChEBI" id="CHEBI:18420"/>
    </ligand>
</feature>
<feature type="site" description="Transition state stabilizer" evidence="1">
    <location>
        <position position="180"/>
    </location>
</feature>
<feature type="site" description="Transition state stabilizer" evidence="1">
    <location>
        <position position="241"/>
    </location>
</feature>
<name>ACKA_PORGI</name>
<keyword id="KW-0067">ATP-binding</keyword>
<keyword id="KW-0963">Cytoplasm</keyword>
<keyword id="KW-0418">Kinase</keyword>
<keyword id="KW-0460">Magnesium</keyword>
<keyword id="KW-0479">Metal-binding</keyword>
<keyword id="KW-0547">Nucleotide-binding</keyword>
<keyword id="KW-1185">Reference proteome</keyword>
<keyword id="KW-0808">Transferase</keyword>
<proteinExistence type="inferred from homology"/>
<dbReference type="EC" id="2.7.2.1" evidence="1"/>
<dbReference type="EMBL" id="AE015924">
    <property type="protein sequence ID" value="AAQ66195.1"/>
    <property type="molecule type" value="Genomic_DNA"/>
</dbReference>
<dbReference type="RefSeq" id="WP_005873657.1">
    <property type="nucleotide sequence ID" value="NC_002950.2"/>
</dbReference>
<dbReference type="SMR" id="Q7MVI0"/>
<dbReference type="STRING" id="242619.PG_1081"/>
<dbReference type="EnsemblBacteria" id="AAQ66195">
    <property type="protein sequence ID" value="AAQ66195"/>
    <property type="gene ID" value="PG_1081"/>
</dbReference>
<dbReference type="KEGG" id="pgi:PG_1081"/>
<dbReference type="PATRIC" id="fig|242619.8.peg.998"/>
<dbReference type="eggNOG" id="COG0282">
    <property type="taxonomic scope" value="Bacteria"/>
</dbReference>
<dbReference type="HOGENOM" id="CLU_020352_0_1_10"/>
<dbReference type="BioCyc" id="PGIN242619:G1G02-1009-MONOMER"/>
<dbReference type="UniPathway" id="UPA00340">
    <property type="reaction ID" value="UER00458"/>
</dbReference>
<dbReference type="Proteomes" id="UP000000588">
    <property type="component" value="Chromosome"/>
</dbReference>
<dbReference type="GO" id="GO:0005737">
    <property type="term" value="C:cytoplasm"/>
    <property type="evidence" value="ECO:0007669"/>
    <property type="project" value="UniProtKB-SubCell"/>
</dbReference>
<dbReference type="GO" id="GO:0008776">
    <property type="term" value="F:acetate kinase activity"/>
    <property type="evidence" value="ECO:0007669"/>
    <property type="project" value="UniProtKB-UniRule"/>
</dbReference>
<dbReference type="GO" id="GO:0005524">
    <property type="term" value="F:ATP binding"/>
    <property type="evidence" value="ECO:0007669"/>
    <property type="project" value="UniProtKB-KW"/>
</dbReference>
<dbReference type="GO" id="GO:0000287">
    <property type="term" value="F:magnesium ion binding"/>
    <property type="evidence" value="ECO:0007669"/>
    <property type="project" value="UniProtKB-UniRule"/>
</dbReference>
<dbReference type="GO" id="GO:0006083">
    <property type="term" value="P:acetate metabolic process"/>
    <property type="evidence" value="ECO:0007669"/>
    <property type="project" value="TreeGrafter"/>
</dbReference>
<dbReference type="GO" id="GO:0006085">
    <property type="term" value="P:acetyl-CoA biosynthetic process"/>
    <property type="evidence" value="ECO:0007669"/>
    <property type="project" value="UniProtKB-UniRule"/>
</dbReference>
<dbReference type="CDD" id="cd24010">
    <property type="entry name" value="ASKHA_NBD_AcK_PK"/>
    <property type="match status" value="1"/>
</dbReference>
<dbReference type="Gene3D" id="3.30.420.40">
    <property type="match status" value="2"/>
</dbReference>
<dbReference type="HAMAP" id="MF_00020">
    <property type="entry name" value="Acetate_kinase"/>
    <property type="match status" value="1"/>
</dbReference>
<dbReference type="InterPro" id="IPR004372">
    <property type="entry name" value="Ac/propionate_kinase"/>
</dbReference>
<dbReference type="InterPro" id="IPR000890">
    <property type="entry name" value="Aliphatic_acid_kin_short-chain"/>
</dbReference>
<dbReference type="InterPro" id="IPR023865">
    <property type="entry name" value="Aliphatic_acid_kinase_CS"/>
</dbReference>
<dbReference type="InterPro" id="IPR043129">
    <property type="entry name" value="ATPase_NBD"/>
</dbReference>
<dbReference type="NCBIfam" id="TIGR00016">
    <property type="entry name" value="ackA"/>
    <property type="match status" value="1"/>
</dbReference>
<dbReference type="PANTHER" id="PTHR21060">
    <property type="entry name" value="ACETATE KINASE"/>
    <property type="match status" value="1"/>
</dbReference>
<dbReference type="PANTHER" id="PTHR21060:SF15">
    <property type="entry name" value="ACETATE KINASE-RELATED"/>
    <property type="match status" value="1"/>
</dbReference>
<dbReference type="Pfam" id="PF00871">
    <property type="entry name" value="Acetate_kinase"/>
    <property type="match status" value="1"/>
</dbReference>
<dbReference type="PIRSF" id="PIRSF000722">
    <property type="entry name" value="Acetate_prop_kin"/>
    <property type="match status" value="1"/>
</dbReference>
<dbReference type="PRINTS" id="PR00471">
    <property type="entry name" value="ACETATEKNASE"/>
</dbReference>
<dbReference type="SUPFAM" id="SSF53067">
    <property type="entry name" value="Actin-like ATPase domain"/>
    <property type="match status" value="2"/>
</dbReference>
<dbReference type="PROSITE" id="PS01075">
    <property type="entry name" value="ACETATE_KINASE_1"/>
    <property type="match status" value="1"/>
</dbReference>
<dbReference type="PROSITE" id="PS01076">
    <property type="entry name" value="ACETATE_KINASE_2"/>
    <property type="match status" value="1"/>
</dbReference>
<accession>Q7MVI0</accession>